<dbReference type="EMBL" id="AP010904">
    <property type="protein sequence ID" value="BAH76655.1"/>
    <property type="molecule type" value="Genomic_DNA"/>
</dbReference>
<dbReference type="RefSeq" id="WP_015861807.1">
    <property type="nucleotide sequence ID" value="NC_012796.1"/>
</dbReference>
<dbReference type="SMR" id="C4XJA5"/>
<dbReference type="STRING" id="573370.DMR_31640"/>
<dbReference type="KEGG" id="dma:DMR_31640"/>
<dbReference type="eggNOG" id="COG0184">
    <property type="taxonomic scope" value="Bacteria"/>
</dbReference>
<dbReference type="HOGENOM" id="CLU_148518_0_0_7"/>
<dbReference type="OrthoDB" id="9799262at2"/>
<dbReference type="Proteomes" id="UP000009071">
    <property type="component" value="Chromosome"/>
</dbReference>
<dbReference type="GO" id="GO:0022627">
    <property type="term" value="C:cytosolic small ribosomal subunit"/>
    <property type="evidence" value="ECO:0007669"/>
    <property type="project" value="TreeGrafter"/>
</dbReference>
<dbReference type="GO" id="GO:0019843">
    <property type="term" value="F:rRNA binding"/>
    <property type="evidence" value="ECO:0007669"/>
    <property type="project" value="UniProtKB-UniRule"/>
</dbReference>
<dbReference type="GO" id="GO:0003735">
    <property type="term" value="F:structural constituent of ribosome"/>
    <property type="evidence" value="ECO:0007669"/>
    <property type="project" value="InterPro"/>
</dbReference>
<dbReference type="GO" id="GO:0006412">
    <property type="term" value="P:translation"/>
    <property type="evidence" value="ECO:0007669"/>
    <property type="project" value="UniProtKB-UniRule"/>
</dbReference>
<dbReference type="CDD" id="cd00353">
    <property type="entry name" value="Ribosomal_S15p_S13e"/>
    <property type="match status" value="1"/>
</dbReference>
<dbReference type="FunFam" id="1.10.287.10:FF:000002">
    <property type="entry name" value="30S ribosomal protein S15"/>
    <property type="match status" value="1"/>
</dbReference>
<dbReference type="Gene3D" id="6.10.250.3130">
    <property type="match status" value="1"/>
</dbReference>
<dbReference type="Gene3D" id="1.10.287.10">
    <property type="entry name" value="S15/NS1, RNA-binding"/>
    <property type="match status" value="1"/>
</dbReference>
<dbReference type="HAMAP" id="MF_01343_B">
    <property type="entry name" value="Ribosomal_uS15_B"/>
    <property type="match status" value="1"/>
</dbReference>
<dbReference type="InterPro" id="IPR000589">
    <property type="entry name" value="Ribosomal_uS15"/>
</dbReference>
<dbReference type="InterPro" id="IPR005290">
    <property type="entry name" value="Ribosomal_uS15_bac-type"/>
</dbReference>
<dbReference type="InterPro" id="IPR009068">
    <property type="entry name" value="uS15_NS1_RNA-bd_sf"/>
</dbReference>
<dbReference type="NCBIfam" id="TIGR00952">
    <property type="entry name" value="S15_bact"/>
    <property type="match status" value="1"/>
</dbReference>
<dbReference type="PANTHER" id="PTHR23321">
    <property type="entry name" value="RIBOSOMAL PROTEIN S15, BACTERIAL AND ORGANELLAR"/>
    <property type="match status" value="1"/>
</dbReference>
<dbReference type="PANTHER" id="PTHR23321:SF26">
    <property type="entry name" value="SMALL RIBOSOMAL SUBUNIT PROTEIN US15M"/>
    <property type="match status" value="1"/>
</dbReference>
<dbReference type="Pfam" id="PF00312">
    <property type="entry name" value="Ribosomal_S15"/>
    <property type="match status" value="1"/>
</dbReference>
<dbReference type="SMART" id="SM01387">
    <property type="entry name" value="Ribosomal_S15"/>
    <property type="match status" value="1"/>
</dbReference>
<dbReference type="SUPFAM" id="SSF47060">
    <property type="entry name" value="S15/NS1 RNA-binding domain"/>
    <property type="match status" value="1"/>
</dbReference>
<dbReference type="PROSITE" id="PS00362">
    <property type="entry name" value="RIBOSOMAL_S15"/>
    <property type="match status" value="1"/>
</dbReference>
<gene>
    <name evidence="1" type="primary">rpsO</name>
    <name type="ordered locus">DMR_31640</name>
</gene>
<accession>C4XJA5</accession>
<feature type="chain" id="PRO_1000214754" description="Small ribosomal subunit protein uS15">
    <location>
        <begin position="1"/>
        <end position="89"/>
    </location>
</feature>
<feature type="region of interest" description="Disordered" evidence="2">
    <location>
        <begin position="1"/>
        <end position="24"/>
    </location>
</feature>
<feature type="compositionally biased region" description="Basic and acidic residues" evidence="2">
    <location>
        <begin position="1"/>
        <end position="21"/>
    </location>
</feature>
<sequence>MVMTAEDKAQVIGEHKKHDGDTGSPEVQVALLTSRIVYLTGHFKSHPKDFHSRTGLLKLVGQRRKLLNYLKKTDVQRYRDLIAKLGLRK</sequence>
<organism>
    <name type="scientific">Solidesulfovibrio magneticus (strain ATCC 700980 / DSM 13731 / RS-1)</name>
    <name type="common">Desulfovibrio magneticus</name>
    <dbReference type="NCBI Taxonomy" id="573370"/>
    <lineage>
        <taxon>Bacteria</taxon>
        <taxon>Pseudomonadati</taxon>
        <taxon>Thermodesulfobacteriota</taxon>
        <taxon>Desulfovibrionia</taxon>
        <taxon>Desulfovibrionales</taxon>
        <taxon>Desulfovibrionaceae</taxon>
        <taxon>Solidesulfovibrio</taxon>
    </lineage>
</organism>
<evidence type="ECO:0000255" key="1">
    <source>
        <dbReference type="HAMAP-Rule" id="MF_01343"/>
    </source>
</evidence>
<evidence type="ECO:0000256" key="2">
    <source>
        <dbReference type="SAM" id="MobiDB-lite"/>
    </source>
</evidence>
<evidence type="ECO:0000305" key="3"/>
<name>RS15_SOLM1</name>
<reference key="1">
    <citation type="journal article" date="2009" name="Genome Res.">
        <title>Whole genome sequence of Desulfovibrio magneticus strain RS-1 revealed common gene clusters in magnetotactic bacteria.</title>
        <authorList>
            <person name="Nakazawa H."/>
            <person name="Arakaki A."/>
            <person name="Narita-Yamada S."/>
            <person name="Yashiro I."/>
            <person name="Jinno K."/>
            <person name="Aoki N."/>
            <person name="Tsuruyama A."/>
            <person name="Okamura Y."/>
            <person name="Tanikawa S."/>
            <person name="Fujita N."/>
            <person name="Takeyama H."/>
            <person name="Matsunaga T."/>
        </authorList>
    </citation>
    <scope>NUCLEOTIDE SEQUENCE [LARGE SCALE GENOMIC DNA]</scope>
    <source>
        <strain>ATCC 700980 / DSM 13731 / RS-1</strain>
    </source>
</reference>
<protein>
    <recommendedName>
        <fullName evidence="1">Small ribosomal subunit protein uS15</fullName>
    </recommendedName>
    <alternativeName>
        <fullName evidence="3">30S ribosomal protein S15</fullName>
    </alternativeName>
</protein>
<keyword id="KW-0687">Ribonucleoprotein</keyword>
<keyword id="KW-0689">Ribosomal protein</keyword>
<keyword id="KW-0694">RNA-binding</keyword>
<keyword id="KW-0699">rRNA-binding</keyword>
<proteinExistence type="inferred from homology"/>
<comment type="function">
    <text evidence="1">One of the primary rRNA binding proteins, it binds directly to 16S rRNA where it helps nucleate assembly of the platform of the 30S subunit by binding and bridging several RNA helices of the 16S rRNA.</text>
</comment>
<comment type="function">
    <text evidence="1">Forms an intersubunit bridge (bridge B4) with the 23S rRNA of the 50S subunit in the ribosome.</text>
</comment>
<comment type="subunit">
    <text evidence="1">Part of the 30S ribosomal subunit. Forms a bridge to the 50S subunit in the 70S ribosome, contacting the 23S rRNA.</text>
</comment>
<comment type="similarity">
    <text evidence="1">Belongs to the universal ribosomal protein uS15 family.</text>
</comment>